<name>PEX14_CRILO</name>
<feature type="initiator methionine" description="Removed" evidence="1">
    <location>
        <position position="1"/>
    </location>
</feature>
<feature type="chain" id="PRO_0000371416" description="Peroxisomal membrane protein PEX14">
    <location>
        <begin position="2"/>
        <end position="377"/>
    </location>
</feature>
<feature type="topological domain" description="Peroxisomal" evidence="3">
    <location>
        <begin position="2"/>
        <end position="108"/>
    </location>
</feature>
<feature type="transmembrane region" description="Helical" evidence="4">
    <location>
        <begin position="109"/>
        <end position="126"/>
    </location>
</feature>
<feature type="topological domain" description="Cytoplasmic" evidence="3">
    <location>
        <begin position="127"/>
        <end position="377"/>
    </location>
</feature>
<feature type="region of interest" description="Disordered" evidence="5">
    <location>
        <begin position="1"/>
        <end position="23"/>
    </location>
</feature>
<feature type="region of interest" description="Disordered" evidence="5">
    <location>
        <begin position="230"/>
        <end position="377"/>
    </location>
</feature>
<feature type="compositionally biased region" description="Low complexity" evidence="5">
    <location>
        <begin position="1"/>
        <end position="20"/>
    </location>
</feature>
<feature type="compositionally biased region" description="Low complexity" evidence="5">
    <location>
        <begin position="244"/>
        <end position="259"/>
    </location>
</feature>
<feature type="compositionally biased region" description="Low complexity" evidence="5">
    <location>
        <begin position="265"/>
        <end position="275"/>
    </location>
</feature>
<feature type="compositionally biased region" description="Acidic residues" evidence="5">
    <location>
        <begin position="323"/>
        <end position="342"/>
    </location>
</feature>
<feature type="compositionally biased region" description="Basic and acidic residues" evidence="5">
    <location>
        <begin position="360"/>
        <end position="377"/>
    </location>
</feature>
<feature type="modified residue" description="N-acetylalanine" evidence="1">
    <location>
        <position position="2"/>
    </location>
</feature>
<feature type="modified residue" description="N6-acetyllysine" evidence="1">
    <location>
        <position position="34"/>
    </location>
</feature>
<feature type="modified residue" description="Phosphoserine" evidence="1">
    <location>
        <position position="232"/>
    </location>
</feature>
<feature type="modified residue" description="Phosphoserine" evidence="3">
    <location>
        <position position="282"/>
    </location>
</feature>
<feature type="modified residue" description="Phosphoserine" evidence="1">
    <location>
        <position position="335"/>
    </location>
</feature>
<protein>
    <recommendedName>
        <fullName evidence="7">Peroxisomal membrane protein PEX14</fullName>
    </recommendedName>
    <alternativeName>
        <fullName>PTS1 receptor-docking protein</fullName>
    </alternativeName>
    <alternativeName>
        <fullName evidence="7">Peroxin-14</fullName>
    </alternativeName>
    <alternativeName>
        <fullName>Peroxisomal membrane anchor protein PEX14</fullName>
    </alternativeName>
</protein>
<gene>
    <name evidence="6" type="primary">PEX14</name>
</gene>
<keyword id="KW-0007">Acetylation</keyword>
<keyword id="KW-0472">Membrane</keyword>
<keyword id="KW-0576">Peroxisome</keyword>
<keyword id="KW-0597">Phosphoprotein</keyword>
<keyword id="KW-0653">Protein transport</keyword>
<keyword id="KW-0811">Translocation</keyword>
<keyword id="KW-0812">Transmembrane</keyword>
<keyword id="KW-1133">Transmembrane helix</keyword>
<keyword id="KW-0813">Transport</keyword>
<comment type="function">
    <text evidence="1 2">Component of the PEX13-PEX14 docking complex, a translocon channel that specifically mediates the import of peroxisomal cargo proteins bound to PEX5 receptor (By similarity). The PEX13-PEX14 docking complex forms a large import pore which can be opened to a diameter of about 9 nm (By similarity). Mechanistically, PEX5 receptor along with cargo proteins associates with the PEX14 subunit of the PEX13-PEX14 docking complex in the cytosol, leading to the insertion of the receptor into the organelle membrane with the concomitant translocation of the cargo into the peroxisome matrix. Plays a key role for peroxisome movement through a direct interaction with tubulin (By similarity).</text>
</comment>
<comment type="subunit">
    <text evidence="1">Interacts with PEX13; forming the PEX13-PEX14 docking complex. Interacts with PEX5 (via WxxxF/Y motifs). Interacts with PEX19. Interacts with tubulin.</text>
</comment>
<comment type="subcellular location">
    <subcellularLocation>
        <location evidence="1">Peroxisome membrane</location>
        <topology evidence="3">Single-pass membrane protein</topology>
    </subcellularLocation>
</comment>
<comment type="similarity">
    <text evidence="7">Belongs to the peroxin-14 family.</text>
</comment>
<organism>
    <name type="scientific">Cricetulus longicaudatus</name>
    <name type="common">Long-tailed dwarf hamster</name>
    <dbReference type="NCBI Taxonomy" id="10030"/>
    <lineage>
        <taxon>Eukaryota</taxon>
        <taxon>Metazoa</taxon>
        <taxon>Chordata</taxon>
        <taxon>Craniata</taxon>
        <taxon>Vertebrata</taxon>
        <taxon>Euteleostomi</taxon>
        <taxon>Mammalia</taxon>
        <taxon>Eutheria</taxon>
        <taxon>Euarchontoglires</taxon>
        <taxon>Glires</taxon>
        <taxon>Rodentia</taxon>
        <taxon>Myomorpha</taxon>
        <taxon>Muroidea</taxon>
        <taxon>Cricetidae</taxon>
        <taxon>Cricetinae</taxon>
        <taxon>Cricetulus</taxon>
    </lineage>
</organism>
<sequence length="377" mass="41197">MASSEQAEQPSQPSSSPGSENVVPREPLIATAVKFLQNSRVRQSPLATRRAFLKKKGLTDDEIDLAFQQSGTATEEPPSLGLATPVAPVQTPHLIAQPCSPGSSRWRDYGALAIIMAGIAFGFHQLYKKYLLPLILGGREDRKQLERMASSLSELSGSVAQTVTQVQTTLASVQELLRQQQQKVQELAHELAAAKATTSTNWILESQNINELKSEINSLKGLLLNRRQFPPSPSAPKIPSWQIPVKSPSPSSPAAVNHHSSSDISPVSNESTSSSPGKESHSPEGSTATYHLLGPQEEGEGVVDVKGQVRMEVQGEEEKREDKEEEEEEEEEDVSHVDEEDVLGVQREDRRGGDGQINEQVDKLRRPEGASNESERH</sequence>
<proteinExistence type="evidence at transcript level"/>
<evidence type="ECO:0000250" key="1">
    <source>
        <dbReference type="UniProtKB" id="O75381"/>
    </source>
</evidence>
<evidence type="ECO:0000250" key="2">
    <source>
        <dbReference type="UniProtKB" id="P53112"/>
    </source>
</evidence>
<evidence type="ECO:0000250" key="3">
    <source>
        <dbReference type="UniProtKB" id="Q642G4"/>
    </source>
</evidence>
<evidence type="ECO:0000255" key="4"/>
<evidence type="ECO:0000256" key="5">
    <source>
        <dbReference type="SAM" id="MobiDB-lite"/>
    </source>
</evidence>
<evidence type="ECO:0000303" key="6">
    <source>
    </source>
</evidence>
<evidence type="ECO:0000305" key="7"/>
<dbReference type="EMBL" id="AB017545">
    <property type="protein sequence ID" value="BAA36836.1"/>
    <property type="molecule type" value="mRNA"/>
</dbReference>
<dbReference type="SMR" id="Q9Z2Z3"/>
<dbReference type="GO" id="GO:1990429">
    <property type="term" value="C:peroxisomal importomer complex"/>
    <property type="evidence" value="ECO:0007669"/>
    <property type="project" value="TreeGrafter"/>
</dbReference>
<dbReference type="GO" id="GO:0005778">
    <property type="term" value="C:peroxisomal membrane"/>
    <property type="evidence" value="ECO:0007669"/>
    <property type="project" value="UniProtKB-SubCell"/>
</dbReference>
<dbReference type="GO" id="GO:0005777">
    <property type="term" value="C:peroxisome"/>
    <property type="evidence" value="ECO:0000314"/>
    <property type="project" value="UniProtKB"/>
</dbReference>
<dbReference type="GO" id="GO:0042802">
    <property type="term" value="F:identical protein binding"/>
    <property type="evidence" value="ECO:0000250"/>
    <property type="project" value="UniProtKB"/>
</dbReference>
<dbReference type="GO" id="GO:0008320">
    <property type="term" value="F:protein transmembrane transporter activity"/>
    <property type="evidence" value="ECO:0000250"/>
    <property type="project" value="UniProtKB"/>
</dbReference>
<dbReference type="GO" id="GO:0030674">
    <property type="term" value="F:protein-macromolecule adaptor activity"/>
    <property type="evidence" value="ECO:0000250"/>
    <property type="project" value="UniProtKB"/>
</dbReference>
<dbReference type="GO" id="GO:0005102">
    <property type="term" value="F:signaling receptor binding"/>
    <property type="evidence" value="ECO:0007669"/>
    <property type="project" value="TreeGrafter"/>
</dbReference>
<dbReference type="GO" id="GO:0003714">
    <property type="term" value="F:transcription corepressor activity"/>
    <property type="evidence" value="ECO:0000250"/>
    <property type="project" value="UniProtKB"/>
</dbReference>
<dbReference type="GO" id="GO:0043433">
    <property type="term" value="P:negative regulation of DNA-binding transcription factor activity"/>
    <property type="evidence" value="ECO:0000250"/>
    <property type="project" value="UniProtKB"/>
</dbReference>
<dbReference type="GO" id="GO:0045892">
    <property type="term" value="P:negative regulation of DNA-templated transcription"/>
    <property type="evidence" value="ECO:0000250"/>
    <property type="project" value="UniProtKB"/>
</dbReference>
<dbReference type="GO" id="GO:0016558">
    <property type="term" value="P:protein import into peroxisome matrix"/>
    <property type="evidence" value="ECO:0000250"/>
    <property type="project" value="UniProtKB"/>
</dbReference>
<dbReference type="GO" id="GO:0016560">
    <property type="term" value="P:protein import into peroxisome matrix, docking"/>
    <property type="evidence" value="ECO:0000250"/>
    <property type="project" value="UniProtKB"/>
</dbReference>
<dbReference type="FunFam" id="1.10.10.10:FF:000296">
    <property type="entry name" value="Peroxisomal membrane protein PEX14"/>
    <property type="match status" value="1"/>
</dbReference>
<dbReference type="Gene3D" id="1.10.10.10">
    <property type="entry name" value="Winged helix-like DNA-binding domain superfamily/Winged helix DNA-binding domain"/>
    <property type="match status" value="1"/>
</dbReference>
<dbReference type="InterPro" id="IPR025655">
    <property type="entry name" value="PEX14"/>
</dbReference>
<dbReference type="InterPro" id="IPR006785">
    <property type="entry name" value="Pex14_N"/>
</dbReference>
<dbReference type="InterPro" id="IPR036388">
    <property type="entry name" value="WH-like_DNA-bd_sf"/>
</dbReference>
<dbReference type="PANTHER" id="PTHR23058">
    <property type="entry name" value="PEROXISOMAL MEMBRANE PROTEIN PEX14"/>
    <property type="match status" value="1"/>
</dbReference>
<dbReference type="PANTHER" id="PTHR23058:SF0">
    <property type="entry name" value="PEROXISOMAL MEMBRANE PROTEIN PEX14"/>
    <property type="match status" value="1"/>
</dbReference>
<dbReference type="Pfam" id="PF04695">
    <property type="entry name" value="Pex14_N"/>
    <property type="match status" value="1"/>
</dbReference>
<reference key="1">
    <citation type="journal article" date="1999" name="J. Biol. Chem.">
        <title>The peroxin Pex14p. cDNA cloning by functional complementation on a Chinese hamster ovary cell mutant, characterization, and functional analysis.</title>
        <authorList>
            <person name="Shimizu N."/>
            <person name="Itoh R."/>
            <person name="Hirono Y."/>
            <person name="Otera H."/>
            <person name="Ghaedi K."/>
            <person name="Tateishi K."/>
            <person name="Tamura S."/>
            <person name="Okumoto K."/>
            <person name="Harano T."/>
            <person name="Mukai S."/>
            <person name="Fujiki Y."/>
        </authorList>
    </citation>
    <scope>NUCLEOTIDE SEQUENCE [MRNA]</scope>
</reference>
<accession>Q9Z2Z3</accession>